<protein>
    <recommendedName>
        <fullName evidence="2 28">RNA cytidine acetyltransferase</fullName>
        <ecNumber evidence="2 15 20">2.3.1.-</ecNumber>
    </recommendedName>
    <alternativeName>
        <fullName evidence="2 29">18S rRNA cytosine acetyltransferase</fullName>
    </alternativeName>
    <alternativeName>
        <fullName evidence="2">N-acetyltransferase 10</fullName>
    </alternativeName>
    <alternativeName>
        <fullName evidence="25">N-acetyltransferase-like protein</fullName>
        <shortName evidence="25">hALP</shortName>
    </alternativeName>
</protein>
<dbReference type="EC" id="2.3.1.-" evidence="2 15 20"/>
<dbReference type="EMBL" id="AB051496">
    <property type="protein sequence ID" value="BAB21800.1"/>
    <property type="status" value="ALT_INIT"/>
    <property type="molecule type" value="mRNA"/>
</dbReference>
<dbReference type="EMBL" id="AL136882">
    <property type="protein sequence ID" value="CAB66816.1"/>
    <property type="molecule type" value="mRNA"/>
</dbReference>
<dbReference type="EMBL" id="AK001636">
    <property type="protein sequence ID" value="BAA91800.1"/>
    <property type="molecule type" value="mRNA"/>
</dbReference>
<dbReference type="EMBL" id="AK022241">
    <property type="protein sequence ID" value="BAB13995.1"/>
    <property type="molecule type" value="mRNA"/>
</dbReference>
<dbReference type="EMBL" id="AK294044">
    <property type="protein sequence ID" value="BAG57396.1"/>
    <property type="molecule type" value="mRNA"/>
</dbReference>
<dbReference type="EMBL" id="AC090469">
    <property type="status" value="NOT_ANNOTATED_CDS"/>
    <property type="molecule type" value="Genomic_DNA"/>
</dbReference>
<dbReference type="EMBL" id="BC035558">
    <property type="protein sequence ID" value="AAH35558.1"/>
    <property type="molecule type" value="mRNA"/>
</dbReference>
<dbReference type="EMBL" id="AF489535">
    <property type="protein sequence ID" value="AAO49126.1"/>
    <property type="status" value="ALT_FRAME"/>
    <property type="molecule type" value="mRNA"/>
</dbReference>
<dbReference type="CCDS" id="CCDS44568.1">
    <molecule id="Q9H0A0-2"/>
</dbReference>
<dbReference type="CCDS" id="CCDS7889.1">
    <molecule id="Q9H0A0-1"/>
</dbReference>
<dbReference type="RefSeq" id="NP_001137502.2">
    <molecule id="Q9H0A0-2"/>
    <property type="nucleotide sequence ID" value="NM_001144030.2"/>
</dbReference>
<dbReference type="RefSeq" id="NP_078938.3">
    <molecule id="Q9H0A0-1"/>
    <property type="nucleotide sequence ID" value="NM_024662.3"/>
</dbReference>
<dbReference type="PDB" id="6VLA">
    <property type="method" value="NMR"/>
    <property type="chains" value="A=891-907"/>
</dbReference>
<dbReference type="PDB" id="7MQ8">
    <property type="method" value="EM"/>
    <property type="resolution" value="3.60 A"/>
    <property type="chains" value="NJ/NK=1-1025"/>
</dbReference>
<dbReference type="PDB" id="7MQ9">
    <property type="method" value="EM"/>
    <property type="resolution" value="3.87 A"/>
    <property type="chains" value="NJ/NK=1-1025"/>
</dbReference>
<dbReference type="PDBsum" id="6VLA"/>
<dbReference type="PDBsum" id="7MQ8"/>
<dbReference type="PDBsum" id="7MQ9"/>
<dbReference type="EMDB" id="EMD-23936"/>
<dbReference type="EMDB" id="EMD-23937"/>
<dbReference type="SMR" id="Q9H0A0"/>
<dbReference type="BioGRID" id="120521">
    <property type="interactions" value="357"/>
</dbReference>
<dbReference type="ComplexPortal" id="CPX-2511">
    <property type="entry name" value="Small ribosomal subunit processome"/>
</dbReference>
<dbReference type="FunCoup" id="Q9H0A0">
    <property type="interactions" value="3720"/>
</dbReference>
<dbReference type="IntAct" id="Q9H0A0">
    <property type="interactions" value="163"/>
</dbReference>
<dbReference type="MINT" id="Q9H0A0"/>
<dbReference type="STRING" id="9606.ENSP00000257829"/>
<dbReference type="ChEMBL" id="CHEMBL4105935"/>
<dbReference type="GlyGen" id="Q9H0A0">
    <property type="glycosylation" value="4 sites, 2 N-linked glycans (3 sites), 1 O-linked glycan (1 site)"/>
</dbReference>
<dbReference type="iPTMnet" id="Q9H0A0"/>
<dbReference type="MetOSite" id="Q9H0A0"/>
<dbReference type="PhosphoSitePlus" id="Q9H0A0"/>
<dbReference type="SwissPalm" id="Q9H0A0"/>
<dbReference type="BioMuta" id="NAT10"/>
<dbReference type="DMDM" id="313104140"/>
<dbReference type="jPOST" id="Q9H0A0"/>
<dbReference type="MassIVE" id="Q9H0A0"/>
<dbReference type="PaxDb" id="9606-ENSP00000257829"/>
<dbReference type="PeptideAtlas" id="Q9H0A0"/>
<dbReference type="ProteomicsDB" id="18059"/>
<dbReference type="ProteomicsDB" id="22170"/>
<dbReference type="ProteomicsDB" id="80229">
    <molecule id="Q9H0A0-1"/>
</dbReference>
<dbReference type="Pumba" id="Q9H0A0"/>
<dbReference type="Antibodypedia" id="25804">
    <property type="antibodies" value="228 antibodies from 34 providers"/>
</dbReference>
<dbReference type="DNASU" id="55226"/>
<dbReference type="Ensembl" id="ENST00000257829.8">
    <molecule id="Q9H0A0-1"/>
    <property type="protein sequence ID" value="ENSP00000257829.3"/>
    <property type="gene ID" value="ENSG00000135372.10"/>
</dbReference>
<dbReference type="Ensembl" id="ENST00000531159.6">
    <molecule id="Q9H0A0-2"/>
    <property type="protein sequence ID" value="ENSP00000433011.2"/>
    <property type="gene ID" value="ENSG00000135372.10"/>
</dbReference>
<dbReference type="GeneID" id="55226"/>
<dbReference type="KEGG" id="hsa:55226"/>
<dbReference type="MANE-Select" id="ENST00000257829.8">
    <property type="protein sequence ID" value="ENSP00000257829.3"/>
    <property type="RefSeq nucleotide sequence ID" value="NM_024662.3"/>
    <property type="RefSeq protein sequence ID" value="NP_078938.3"/>
</dbReference>
<dbReference type="UCSC" id="uc001mvk.4">
    <molecule id="Q9H0A0-1"/>
    <property type="organism name" value="human"/>
</dbReference>
<dbReference type="AGR" id="HGNC:29830"/>
<dbReference type="CTD" id="55226"/>
<dbReference type="DisGeNET" id="55226"/>
<dbReference type="GeneCards" id="NAT10"/>
<dbReference type="HGNC" id="HGNC:29830">
    <property type="gene designation" value="NAT10"/>
</dbReference>
<dbReference type="HPA" id="ENSG00000135372">
    <property type="expression patterns" value="Low tissue specificity"/>
</dbReference>
<dbReference type="MalaCards" id="NAT10"/>
<dbReference type="MIM" id="609221">
    <property type="type" value="gene"/>
</dbReference>
<dbReference type="neXtProt" id="NX_Q9H0A0"/>
<dbReference type="OpenTargets" id="ENSG00000135372"/>
<dbReference type="PharmGKB" id="PA143485555"/>
<dbReference type="VEuPathDB" id="HostDB:ENSG00000135372"/>
<dbReference type="eggNOG" id="KOG2036">
    <property type="taxonomic scope" value="Eukaryota"/>
</dbReference>
<dbReference type="GeneTree" id="ENSGT00390000009140"/>
<dbReference type="HOGENOM" id="CLU_004652_0_0_1"/>
<dbReference type="InParanoid" id="Q9H0A0"/>
<dbReference type="OMA" id="HLHYIMS"/>
<dbReference type="OrthoDB" id="10067491at2759"/>
<dbReference type="PAN-GO" id="Q9H0A0">
    <property type="GO annotations" value="4 GO annotations based on evolutionary models"/>
</dbReference>
<dbReference type="PhylomeDB" id="Q9H0A0"/>
<dbReference type="TreeFam" id="TF300601"/>
<dbReference type="PathwayCommons" id="Q9H0A0"/>
<dbReference type="Reactome" id="R-HSA-6790901">
    <property type="pathway name" value="rRNA modification in the nucleus and cytosol"/>
</dbReference>
<dbReference type="SignaLink" id="Q9H0A0"/>
<dbReference type="SIGNOR" id="Q9H0A0"/>
<dbReference type="BioGRID-ORCS" id="55226">
    <property type="hits" value="775 hits in 1174 CRISPR screens"/>
</dbReference>
<dbReference type="CD-CODE" id="91857CE7">
    <property type="entry name" value="Nucleolus"/>
</dbReference>
<dbReference type="ChiTaRS" id="NAT10">
    <property type="organism name" value="human"/>
</dbReference>
<dbReference type="GeneWiki" id="NAT10"/>
<dbReference type="GenomeRNAi" id="55226"/>
<dbReference type="Pharos" id="Q9H0A0">
    <property type="development level" value="Tbio"/>
</dbReference>
<dbReference type="PRO" id="PR:Q9H0A0"/>
<dbReference type="Proteomes" id="UP000005640">
    <property type="component" value="Chromosome 11"/>
</dbReference>
<dbReference type="RNAct" id="Q9H0A0">
    <property type="molecule type" value="protein"/>
</dbReference>
<dbReference type="Bgee" id="ENSG00000135372">
    <property type="expression patterns" value="Expressed in sural nerve and 198 other cell types or tissues"/>
</dbReference>
<dbReference type="ExpressionAtlas" id="Q9H0A0">
    <property type="expression patterns" value="baseline and differential"/>
</dbReference>
<dbReference type="GO" id="GO:0000781">
    <property type="term" value="C:chromosome, telomeric region"/>
    <property type="evidence" value="ECO:0007005"/>
    <property type="project" value="BHF-UCL"/>
</dbReference>
<dbReference type="GO" id="GO:0016020">
    <property type="term" value="C:membrane"/>
    <property type="evidence" value="ECO:0007005"/>
    <property type="project" value="UniProtKB"/>
</dbReference>
<dbReference type="GO" id="GO:0030496">
    <property type="term" value="C:midbody"/>
    <property type="evidence" value="ECO:0000314"/>
    <property type="project" value="HPA"/>
</dbReference>
<dbReference type="GO" id="GO:0005730">
    <property type="term" value="C:nucleolus"/>
    <property type="evidence" value="ECO:0000314"/>
    <property type="project" value="BHF-UCL"/>
</dbReference>
<dbReference type="GO" id="GO:0005654">
    <property type="term" value="C:nucleoplasm"/>
    <property type="evidence" value="ECO:0000304"/>
    <property type="project" value="Reactome"/>
</dbReference>
<dbReference type="GO" id="GO:0005634">
    <property type="term" value="C:nucleus"/>
    <property type="evidence" value="ECO:0000303"/>
    <property type="project" value="UniProtKB"/>
</dbReference>
<dbReference type="GO" id="GO:0032040">
    <property type="term" value="C:small-subunit processome"/>
    <property type="evidence" value="ECO:0000314"/>
    <property type="project" value="UniProtKB"/>
</dbReference>
<dbReference type="GO" id="GO:0005697">
    <property type="term" value="C:telomerase holoenzyme complex"/>
    <property type="evidence" value="ECO:0000314"/>
    <property type="project" value="BHF-UCL"/>
</dbReference>
<dbReference type="GO" id="GO:1990883">
    <property type="term" value="F:18S rRNA cytidine N-acetyltransferase activity"/>
    <property type="evidence" value="ECO:0000318"/>
    <property type="project" value="GO_Central"/>
</dbReference>
<dbReference type="GO" id="GO:0005524">
    <property type="term" value="F:ATP binding"/>
    <property type="evidence" value="ECO:0007669"/>
    <property type="project" value="UniProtKB-UniRule"/>
</dbReference>
<dbReference type="GO" id="GO:0070182">
    <property type="term" value="F:DNA polymerase binding"/>
    <property type="evidence" value="ECO:0000353"/>
    <property type="project" value="BHF-UCL"/>
</dbReference>
<dbReference type="GO" id="GO:0106162">
    <property type="term" value="F:mRNA N-acetyltransferase activity"/>
    <property type="evidence" value="ECO:0000314"/>
    <property type="project" value="UniProtKB"/>
</dbReference>
<dbReference type="GO" id="GO:0008080">
    <property type="term" value="F:N-acetyltransferase activity"/>
    <property type="evidence" value="ECO:0000269"/>
    <property type="project" value="Reactome"/>
</dbReference>
<dbReference type="GO" id="GO:0003723">
    <property type="term" value="F:RNA binding"/>
    <property type="evidence" value="ECO:0007005"/>
    <property type="project" value="UniProtKB"/>
</dbReference>
<dbReference type="GO" id="GO:0000049">
    <property type="term" value="F:tRNA binding"/>
    <property type="evidence" value="ECO:0000318"/>
    <property type="project" value="GO_Central"/>
</dbReference>
<dbReference type="GO" id="GO:0051392">
    <property type="term" value="F:tRNA N4-acetyltransferase activity"/>
    <property type="evidence" value="ECO:0000318"/>
    <property type="project" value="GO_Central"/>
</dbReference>
<dbReference type="GO" id="GO:0032211">
    <property type="term" value="P:negative regulation of telomere maintenance via telomerase"/>
    <property type="evidence" value="ECO:0000315"/>
    <property type="project" value="BHF-UCL"/>
</dbReference>
<dbReference type="GO" id="GO:0045727">
    <property type="term" value="P:positive regulation of translation"/>
    <property type="evidence" value="ECO:0000314"/>
    <property type="project" value="UniProtKB"/>
</dbReference>
<dbReference type="GO" id="GO:0006473">
    <property type="term" value="P:protein acetylation"/>
    <property type="evidence" value="ECO:0000314"/>
    <property type="project" value="UniProtKB"/>
</dbReference>
<dbReference type="GO" id="GO:0010824">
    <property type="term" value="P:regulation of centrosome duplication"/>
    <property type="evidence" value="ECO:0000314"/>
    <property type="project" value="UniProtKB"/>
</dbReference>
<dbReference type="GO" id="GO:0006417">
    <property type="term" value="P:regulation of translation"/>
    <property type="evidence" value="ECO:0000314"/>
    <property type="project" value="UniProtKB"/>
</dbReference>
<dbReference type="GO" id="GO:0042274">
    <property type="term" value="P:ribosomal small subunit biogenesis"/>
    <property type="evidence" value="ECO:0000314"/>
    <property type="project" value="UniProtKB"/>
</dbReference>
<dbReference type="GO" id="GO:1904812">
    <property type="term" value="P:rRNA acetylation involved in maturation of SSU-rRNA"/>
    <property type="evidence" value="ECO:0000318"/>
    <property type="project" value="GO_Central"/>
</dbReference>
<dbReference type="GO" id="GO:0000154">
    <property type="term" value="P:rRNA modification"/>
    <property type="evidence" value="ECO:0000304"/>
    <property type="project" value="Reactome"/>
</dbReference>
<dbReference type="GO" id="GO:0051391">
    <property type="term" value="P:tRNA acetylation"/>
    <property type="evidence" value="ECO:0000318"/>
    <property type="project" value="GO_Central"/>
</dbReference>
<dbReference type="GO" id="GO:0002101">
    <property type="term" value="P:tRNA wobble cytosine modification"/>
    <property type="evidence" value="ECO:0000318"/>
    <property type="project" value="GO_Central"/>
</dbReference>
<dbReference type="CDD" id="cd04301">
    <property type="entry name" value="NAT_SF"/>
    <property type="match status" value="1"/>
</dbReference>
<dbReference type="FunFam" id="3.40.50.11040:FF:000006">
    <property type="entry name" value="RNA cytidine acetyltransferase"/>
    <property type="match status" value="1"/>
</dbReference>
<dbReference type="FunFam" id="3.40.630.30:FF:000019">
    <property type="entry name" value="RNA cytidine acetyltransferase"/>
    <property type="match status" value="1"/>
</dbReference>
<dbReference type="FunFam" id="3.40.50.300:FF:002218">
    <property type="entry name" value="tRNA(Met) cytidine acetyltransferase TmcA"/>
    <property type="match status" value="1"/>
</dbReference>
<dbReference type="Gene3D" id="3.40.50.11040">
    <property type="match status" value="1"/>
</dbReference>
<dbReference type="Gene3D" id="3.40.630.30">
    <property type="match status" value="1"/>
</dbReference>
<dbReference type="Gene3D" id="3.40.50.300">
    <property type="entry name" value="P-loop containing nucleotide triphosphate hydrolases"/>
    <property type="match status" value="1"/>
</dbReference>
<dbReference type="HAMAP" id="MF_03211">
    <property type="entry name" value="RNA_acetyltr_Nat10"/>
    <property type="match status" value="1"/>
</dbReference>
<dbReference type="InterPro" id="IPR016181">
    <property type="entry name" value="Acyl_CoA_acyltransferase"/>
</dbReference>
<dbReference type="InterPro" id="IPR000182">
    <property type="entry name" value="GNAT_dom"/>
</dbReference>
<dbReference type="InterPro" id="IPR033688">
    <property type="entry name" value="NAT10"/>
</dbReference>
<dbReference type="InterPro" id="IPR007807">
    <property type="entry name" value="NAT10/TcmA_helicase"/>
</dbReference>
<dbReference type="InterPro" id="IPR027417">
    <property type="entry name" value="P-loop_NTPase"/>
</dbReference>
<dbReference type="InterPro" id="IPR032672">
    <property type="entry name" value="TmcA/NAT10/Kre33"/>
</dbReference>
<dbReference type="InterPro" id="IPR013562">
    <property type="entry name" value="TmcA_N"/>
</dbReference>
<dbReference type="InterPro" id="IPR027992">
    <property type="entry name" value="tRNA_bind_dom"/>
</dbReference>
<dbReference type="PANTHER" id="PTHR10925">
    <property type="entry name" value="N-ACETYLTRANSFERASE 10"/>
    <property type="match status" value="1"/>
</dbReference>
<dbReference type="PANTHER" id="PTHR10925:SF5">
    <property type="entry name" value="RNA CYTIDINE ACETYLTRANSFERASE"/>
    <property type="match status" value="1"/>
</dbReference>
<dbReference type="Pfam" id="PF13718">
    <property type="entry name" value="GNAT_acetyltr_2"/>
    <property type="match status" value="1"/>
</dbReference>
<dbReference type="Pfam" id="PF05127">
    <property type="entry name" value="NAT10_TcmA_helicase"/>
    <property type="match status" value="1"/>
</dbReference>
<dbReference type="Pfam" id="PF08351">
    <property type="entry name" value="TmcA_N"/>
    <property type="match status" value="1"/>
</dbReference>
<dbReference type="Pfam" id="PF13725">
    <property type="entry name" value="tRNA_bind_2"/>
    <property type="match status" value="1"/>
</dbReference>
<dbReference type="SUPFAM" id="SSF55729">
    <property type="entry name" value="Acyl-CoA N-acyltransferases (Nat)"/>
    <property type="match status" value="1"/>
</dbReference>
<dbReference type="PROSITE" id="PS51186">
    <property type="entry name" value="GNAT"/>
    <property type="match status" value="1"/>
</dbReference>
<feature type="chain" id="PRO_0000215883" description="RNA cytidine acetyltransferase">
    <location>
        <begin position="1"/>
        <end position="1025"/>
    </location>
</feature>
<feature type="domain" description="N-acetyltransferase" evidence="2">
    <location>
        <begin position="558"/>
        <end position="753"/>
    </location>
</feature>
<feature type="region of interest" description="Required for localization to the nucleolus and midbody" evidence="13">
    <location>
        <begin position="702"/>
        <end position="1025"/>
    </location>
</feature>
<feature type="region of interest" description="Disordered" evidence="3">
    <location>
        <begin position="990"/>
        <end position="1025"/>
    </location>
</feature>
<feature type="compositionally biased region" description="Basic and acidic residues" evidence="3">
    <location>
        <begin position="997"/>
        <end position="1018"/>
    </location>
</feature>
<feature type="binding site" evidence="2">
    <location>
        <begin position="287"/>
        <end position="296"/>
    </location>
    <ligand>
        <name>ATP</name>
        <dbReference type="ChEBI" id="CHEBI:30616"/>
    </ligand>
</feature>
<feature type="binding site" evidence="2">
    <location>
        <position position="470"/>
    </location>
    <ligand>
        <name>ATP</name>
        <dbReference type="ChEBI" id="CHEBI:30616"/>
    </ligand>
</feature>
<feature type="binding site" evidence="2">
    <location>
        <begin position="629"/>
        <end position="631"/>
    </location>
    <ligand>
        <name>acetyl-CoA</name>
        <dbReference type="ChEBI" id="CHEBI:57288"/>
    </ligand>
</feature>
<feature type="binding site" evidence="2">
    <location>
        <begin position="636"/>
        <end position="642"/>
    </location>
    <ligand>
        <name>acetyl-CoA</name>
        <dbReference type="ChEBI" id="CHEBI:57288"/>
    </ligand>
</feature>
<feature type="binding site" evidence="2">
    <location>
        <position position="725"/>
    </location>
    <ligand>
        <name>acetyl-CoA</name>
        <dbReference type="ChEBI" id="CHEBI:57288"/>
    </ligand>
</feature>
<feature type="modified residue" description="N6-acetyllysine" evidence="18 34">
    <location>
        <position position="426"/>
    </location>
</feature>
<feature type="modified residue" description="Phosphothreonine" evidence="36">
    <location>
        <position position="716"/>
    </location>
</feature>
<feature type="modified residue" description="Phosphoserine" evidence="33 36">
    <location>
        <position position="934"/>
    </location>
</feature>
<feature type="modified residue" description="Phosphoserine" evidence="33 36">
    <location>
        <position position="984"/>
    </location>
</feature>
<feature type="modified residue" description="Phosphoserine" evidence="33 36">
    <location>
        <position position="987"/>
    </location>
</feature>
<feature type="splice variant" id="VSP_054018" description="In isoform 2." evidence="26">
    <location>
        <begin position="1"/>
        <end position="72"/>
    </location>
</feature>
<feature type="sequence variant" id="VAR_059858" description="In dbSNP:rs2957516." evidence="4 5 7 8 9 35">
    <original>Y</original>
    <variation>H</variation>
    <location>
        <position position="461"/>
    </location>
</feature>
<feature type="sequence variant" id="VAR_061894" description="In dbSNP:rs36006049.">
    <original>A</original>
    <variation>T</variation>
    <location>
        <position position="983"/>
    </location>
</feature>
<feature type="mutagenesis site" description="Abolished acetylation." evidence="18">
    <original>K</original>
    <variation>R</variation>
    <location>
        <position position="426"/>
    </location>
</feature>
<feature type="mutagenesis site" description="Abolished acetyltransferase activity, probably caused by impaired acetyl-CoA binding." evidence="14">
    <original>G</original>
    <variation>E</variation>
    <location>
        <position position="641"/>
    </location>
</feature>
<feature type="sequence conflict" description="In Ref. 3; BAA91800." evidence="30" ref="3">
    <original>F</original>
    <variation>L</variation>
    <location>
        <position position="26"/>
    </location>
</feature>
<feature type="sequence conflict" description="In Ref. 6; AAO49126." evidence="30" ref="6">
    <original>T</original>
    <variation>A</variation>
    <location>
        <position position="162"/>
    </location>
</feature>
<feature type="sequence conflict" description="In Ref. 3; BAB13995." evidence="30" ref="3">
    <original>S</original>
    <variation>C</variation>
    <location>
        <position position="315"/>
    </location>
</feature>
<feature type="sequence conflict" description="In Ref. 3; BAG57396." evidence="30" ref="3">
    <original>Y</original>
    <variation>C</variation>
    <location>
        <position position="405"/>
    </location>
</feature>
<feature type="sequence conflict" description="In Ref. 3; BAB13995." evidence="30" ref="3">
    <original>Q</original>
    <variation>R</variation>
    <location>
        <position position="879"/>
    </location>
</feature>
<feature type="sequence conflict" description="In Ref. 3; BAG57396." evidence="30" ref="3">
    <original>E</original>
    <variation>G</variation>
    <location>
        <position position="971"/>
    </location>
</feature>
<feature type="helix" evidence="37">
    <location>
        <begin position="893"/>
        <end position="906"/>
    </location>
</feature>
<gene>
    <name evidence="2" type="primary">NAT10</name>
    <name evidence="25 27" type="synonym">ALP</name>
    <name evidence="24" type="synonym">KIAA1709</name>
</gene>
<organism>
    <name type="scientific">Homo sapiens</name>
    <name type="common">Human</name>
    <dbReference type="NCBI Taxonomy" id="9606"/>
    <lineage>
        <taxon>Eukaryota</taxon>
        <taxon>Metazoa</taxon>
        <taxon>Chordata</taxon>
        <taxon>Craniata</taxon>
        <taxon>Vertebrata</taxon>
        <taxon>Euteleostomi</taxon>
        <taxon>Mammalia</taxon>
        <taxon>Eutheria</taxon>
        <taxon>Euarchontoglires</taxon>
        <taxon>Primates</taxon>
        <taxon>Haplorrhini</taxon>
        <taxon>Catarrhini</taxon>
        <taxon>Hominidae</taxon>
        <taxon>Homo</taxon>
    </lineage>
</organism>
<name>NAT10_HUMAN</name>
<comment type="function">
    <text evidence="1 7 11 12 13 15 16 17 18 19 20 21 22 23">RNA cytidine acetyltransferase that catalyzes the formation of N(4)-acetylcytidine (ac4C) modification on mRNAs, 18S rRNA and tRNAs (PubMed:25411247, PubMed:25653167, PubMed:30449621, PubMed:35679869). Catalyzes ac4C modification of a broad range of mRNAs, enhancing mRNA stability and translation (PubMed:30449621, PubMed:35679869). mRNA ac4C modification is frequently present within wobble cytidine sites and promotes translation efficiency (PubMed:30449621). Mediates the formation of ac4C at position 1842 in 18S rRNA (PubMed:25411247). May also catalyze the formation of ac4C at position 1337 in 18S rRNA (By similarity). Required for early nucleolar cleavages of precursor rRNA at sites A0, A1 and A2 during 18S rRNA synthesis (PubMed:25411247, PubMed:25653167). Catalyzes the formation of ac4C in serine and leucine tRNAs (By similarity). Requires the tRNA-binding adapter protein THUMPD1 for full tRNA acetyltransferase activity but not for 18S rRNA acetylation (PubMed:25653167). In addition to RNA acetyltransferase activity, also able to acetylate lysine residues of proteins, such as histones, microtubules, p53/TP53 and MDM2, in vitro (PubMed:14592445, PubMed:17631499, PubMed:19303003, PubMed:26882543, PubMed:27993683, PubMed:30165671). The relevance of the protein lysine acetyltransferase activity is however unsure in vivo (PubMed:30449621). Activates telomerase activity by stimulating the transcription of TERT, and may also regulate telomerase function by affecting the balance of telomerase subunit assembly, disassembly, and localization (PubMed:14592445, PubMed:18082603). Involved in the regulation of centrosome duplication by acetylating CENATAC during mitosis, promoting SASS6 proteasome degradation (PubMed:31722219). Part of the small subunit (SSU) processome, first precursor of the small eukaryotic ribosomal subunit. During the assembly of the SSU processome in the nucleolus, many ribosome biogenesis factors, an RNA chaperone and ribosomal proteins associate with the nascent pre-rRNA and work in concert to generate RNA folding, modifications, rearrangements and cleavage as well as targeted degradation of pre-ribosomal RNA by the RNA exosome (PubMed:34516797).</text>
</comment>
<comment type="catalytic activity">
    <reaction evidence="2 15">
        <text>a cytidine in 18S rRNA + acetyl-CoA + ATP + H2O = an N(4)-acetylcytidine in 18S rRNA + ADP + phosphate + CoA + H(+)</text>
        <dbReference type="Rhea" id="RHEA:51424"/>
        <dbReference type="Rhea" id="RHEA-COMP:13575"/>
        <dbReference type="Rhea" id="RHEA-COMP:13576"/>
        <dbReference type="ChEBI" id="CHEBI:15377"/>
        <dbReference type="ChEBI" id="CHEBI:15378"/>
        <dbReference type="ChEBI" id="CHEBI:30616"/>
        <dbReference type="ChEBI" id="CHEBI:43474"/>
        <dbReference type="ChEBI" id="CHEBI:57287"/>
        <dbReference type="ChEBI" id="CHEBI:57288"/>
        <dbReference type="ChEBI" id="CHEBI:74900"/>
        <dbReference type="ChEBI" id="CHEBI:82748"/>
        <dbReference type="ChEBI" id="CHEBI:456216"/>
    </reaction>
</comment>
<comment type="catalytic activity">
    <reaction evidence="2">
        <text>a cytidine in tRNA + acetyl-CoA + ATP + H2O = an N(4)-acetylcytidine in tRNA + ADP + phosphate + CoA + H(+)</text>
        <dbReference type="Rhea" id="RHEA:53876"/>
        <dbReference type="Rhea" id="RHEA-COMP:13670"/>
        <dbReference type="Rhea" id="RHEA-COMP:13671"/>
        <dbReference type="ChEBI" id="CHEBI:15377"/>
        <dbReference type="ChEBI" id="CHEBI:15378"/>
        <dbReference type="ChEBI" id="CHEBI:30616"/>
        <dbReference type="ChEBI" id="CHEBI:43474"/>
        <dbReference type="ChEBI" id="CHEBI:57287"/>
        <dbReference type="ChEBI" id="CHEBI:57288"/>
        <dbReference type="ChEBI" id="CHEBI:74900"/>
        <dbReference type="ChEBI" id="CHEBI:82748"/>
        <dbReference type="ChEBI" id="CHEBI:456216"/>
    </reaction>
</comment>
<comment type="catalytic activity">
    <reaction evidence="20 23">
        <text>a cytidine in mRNA + acetyl-CoA + ATP + H2O = an N(4)-acetylcytidine in mRNA + ADP + phosphate + CoA + H(+)</text>
        <dbReference type="Rhea" id="RHEA:58480"/>
        <dbReference type="Rhea" id="RHEA-COMP:15145"/>
        <dbReference type="Rhea" id="RHEA-COMP:15146"/>
        <dbReference type="ChEBI" id="CHEBI:15377"/>
        <dbReference type="ChEBI" id="CHEBI:15378"/>
        <dbReference type="ChEBI" id="CHEBI:30616"/>
        <dbReference type="ChEBI" id="CHEBI:43474"/>
        <dbReference type="ChEBI" id="CHEBI:57287"/>
        <dbReference type="ChEBI" id="CHEBI:57288"/>
        <dbReference type="ChEBI" id="CHEBI:74900"/>
        <dbReference type="ChEBI" id="CHEBI:82748"/>
        <dbReference type="ChEBI" id="CHEBI:456216"/>
    </reaction>
    <physiologicalReaction direction="left-to-right" evidence="20 23">
        <dbReference type="Rhea" id="RHEA:58481"/>
    </physiologicalReaction>
</comment>
<comment type="activity regulation">
    <text evidence="14">Specifically inhibited by remodelin (4-[2-(2-cyclopentylidenehydrazinyl)-4-thiazolyl]-benzonitrile, monohydrobromide), a hydrobromide salt molecule (PubMed:24786082). Remodelin can improve nuclear architecture, chromatin organization and fitness of cells from patients suffering from Hutchinson-Gilford progeria syndrome (HGPS); molecular mechanisms explaining the relation between NAT10 activity and nuclear architecture are however unclear (PubMed:24786082).</text>
</comment>
<comment type="subunit">
    <text evidence="2 11 12 16 22">Part of the small subunit (SSU) processome, composed of more than 70 proteins and the RNA chaperone small nucleolar RNA (snoRNA) U3 (PubMed:34516797). Interacts with THUMPD1 (PubMed:25653167). Interacts with SUN1 (via N-terminus) (PubMed:17631499). Interacts with TERT (PubMed:18082603).</text>
</comment>
<comment type="interaction">
    <interactant intactId="EBI-876527">
        <id>Q9H0A0</id>
    </interactant>
    <interactant intactId="EBI-443446">
        <id>P15880</id>
        <label>RPS2</label>
    </interactant>
    <organismsDiffer>false</organismsDiffer>
    <experiments>4</experiments>
</comment>
<comment type="interaction">
    <interactant intactId="EBI-876527">
        <id>Q9H0A0</id>
    </interactant>
    <interactant intactId="EBI-5462248">
        <id>Q9NXG2</id>
        <label>THUMPD1</label>
    </interactant>
    <organismsDiffer>false</organismsDiffer>
    <experiments>5</experiments>
</comment>
<comment type="subcellular location">
    <subcellularLocation>
        <location evidence="2 6 7 13 14 16 19 22">Nucleus</location>
        <location evidence="2 6 7 13 14 16 19 22">Nucleolus</location>
    </subcellularLocation>
    <subcellularLocation>
        <location evidence="2 13">Midbody</location>
    </subcellularLocation>
    <text evidence="13">Nucleolar in interphase and redistributes to the perichromosomal layer and to the midbody during telophase.</text>
</comment>
<comment type="alternative products">
    <event type="alternative splicing"/>
    <isoform>
        <id>Q9H0A0-1</id>
        <name>1</name>
        <sequence type="displayed"/>
    </isoform>
    <isoform>
        <id>Q9H0A0-2</id>
        <name>2</name>
        <sequence type="described" ref="VSP_054018"/>
    </isoform>
</comment>
<comment type="induction">
    <text evidence="10">Transcriptionally activated by genotoxic agents; possible role in DNA damage and induction of cellular resistance to genotoxic agents.</text>
</comment>
<comment type="PTM">
    <text evidence="18">Acetylation at Lys-426 is required to activation of rRNA transcription (PubMed:27993683). May be autoacetylated; however ability to autoacetylate in vivo requires additional evidences (PubMed:27993683).</text>
</comment>
<comment type="similarity">
    <text evidence="2">Belongs to the RNA cytidine acetyltransferase family. NAT10 subfamily.</text>
</comment>
<comment type="caution">
    <text evidence="7 11 13 17 18 19 20">A number of papers have reported some protein lysine acetyltransferase activity in vitro (PubMed:14592445, PubMed:17631499, PubMed:19303003, PubMed:26882543, PubMed:27993683, PubMed:30165671). However, most experiments have been performed in vitro using a protein construct lacking the RNA-binding region at the terminus (PubMed:14592445, PubMed:17631499, PubMed:19303003). Recent evidence suggests that NAT10 mainly acts as a RNA cytidine acetyltransferase in vivo (PubMed:30449621).</text>
</comment>
<comment type="sequence caution" evidence="30">
    <conflict type="frameshift">
        <sequence resource="EMBL-CDS" id="AAO49126"/>
    </conflict>
</comment>
<comment type="sequence caution" evidence="30">
    <conflict type="erroneous initiation">
        <sequence resource="EMBL-CDS" id="BAB21800"/>
    </conflict>
    <text>Extended N-terminus.</text>
</comment>
<evidence type="ECO:0000250" key="1">
    <source>
        <dbReference type="UniProtKB" id="P53914"/>
    </source>
</evidence>
<evidence type="ECO:0000255" key="2">
    <source>
        <dbReference type="HAMAP-Rule" id="MF_03211"/>
    </source>
</evidence>
<evidence type="ECO:0000256" key="3">
    <source>
        <dbReference type="SAM" id="MobiDB-lite"/>
    </source>
</evidence>
<evidence type="ECO:0000269" key="4">
    <source>
    </source>
</evidence>
<evidence type="ECO:0000269" key="5">
    <source>
    </source>
</evidence>
<evidence type="ECO:0000269" key="6">
    <source>
    </source>
</evidence>
<evidence type="ECO:0000269" key="7">
    <source>
    </source>
</evidence>
<evidence type="ECO:0000269" key="8">
    <source>
    </source>
</evidence>
<evidence type="ECO:0000269" key="9">
    <source>
    </source>
</evidence>
<evidence type="ECO:0000269" key="10">
    <source>
    </source>
</evidence>
<evidence type="ECO:0000269" key="11">
    <source>
    </source>
</evidence>
<evidence type="ECO:0000269" key="12">
    <source>
    </source>
</evidence>
<evidence type="ECO:0000269" key="13">
    <source>
    </source>
</evidence>
<evidence type="ECO:0000269" key="14">
    <source>
    </source>
</evidence>
<evidence type="ECO:0000269" key="15">
    <source>
    </source>
</evidence>
<evidence type="ECO:0000269" key="16">
    <source>
    </source>
</evidence>
<evidence type="ECO:0000269" key="17">
    <source>
    </source>
</evidence>
<evidence type="ECO:0000269" key="18">
    <source>
    </source>
</evidence>
<evidence type="ECO:0000269" key="19">
    <source>
    </source>
</evidence>
<evidence type="ECO:0000269" key="20">
    <source>
    </source>
</evidence>
<evidence type="ECO:0000269" key="21">
    <source>
    </source>
</evidence>
<evidence type="ECO:0000269" key="22">
    <source>
    </source>
</evidence>
<evidence type="ECO:0000269" key="23">
    <source>
    </source>
</evidence>
<evidence type="ECO:0000303" key="24">
    <source>
    </source>
</evidence>
<evidence type="ECO:0000303" key="25">
    <source>
    </source>
</evidence>
<evidence type="ECO:0000303" key="26">
    <source>
    </source>
</evidence>
<evidence type="ECO:0000303" key="27">
    <source>
    </source>
</evidence>
<evidence type="ECO:0000303" key="28">
    <source>
    </source>
</evidence>
<evidence type="ECO:0000303" key="29">
    <source>
    </source>
</evidence>
<evidence type="ECO:0000305" key="30"/>
<evidence type="ECO:0007744" key="31">
    <source>
        <dbReference type="PDB" id="7MQ8"/>
    </source>
</evidence>
<evidence type="ECO:0007744" key="32">
    <source>
        <dbReference type="PDB" id="7MQ9"/>
    </source>
</evidence>
<evidence type="ECO:0007744" key="33">
    <source>
    </source>
</evidence>
<evidence type="ECO:0007744" key="34">
    <source>
    </source>
</evidence>
<evidence type="ECO:0007744" key="35">
    <source>
    </source>
</evidence>
<evidence type="ECO:0007744" key="36">
    <source>
    </source>
</evidence>
<evidence type="ECO:0007829" key="37">
    <source>
        <dbReference type="PDB" id="6VLA"/>
    </source>
</evidence>
<proteinExistence type="evidence at protein level"/>
<keyword id="KW-0002">3D-structure</keyword>
<keyword id="KW-0007">Acetylation</keyword>
<keyword id="KW-0012">Acyltransferase</keyword>
<keyword id="KW-0025">Alternative splicing</keyword>
<keyword id="KW-0067">ATP-binding</keyword>
<keyword id="KW-0547">Nucleotide-binding</keyword>
<keyword id="KW-0539">Nucleus</keyword>
<keyword id="KW-0597">Phosphoprotein</keyword>
<keyword id="KW-1267">Proteomics identification</keyword>
<keyword id="KW-1185">Reference proteome</keyword>
<keyword id="KW-0698">rRNA processing</keyword>
<keyword id="KW-0808">Transferase</keyword>
<keyword id="KW-0819">tRNA processing</keyword>
<accession>Q9H0A0</accession>
<accession>B4DFD5</accession>
<accession>E7ESU4</accession>
<accession>E9PMN9</accession>
<accession>Q86WK5</accession>
<accession>Q9C0F4</accession>
<accession>Q9HA61</accession>
<accession>Q9NVF2</accession>
<sequence length="1025" mass="115730">MHRKKVDNRIRILIENGVAERQRSLFVVVGDRGKDQVVILHHMLSKATVKARPSVLWCYKKELGFSSHRKKRMRQLQKKIKNGTLNIKQDDPFELFIAATNIRYCYYNETHKILGNTFGMCVLQDFEALTPNLLARTVETVEGGGLVVILLRTMNSLKQLYTVTMDVHSRYRTEAHQDVVGRFNERFILSLASCKKCLVIDDQLNILPISSHVATMEALPPQTPDESLGPSDLELRELKESLQDTQPVGVLVDCCKTLDQAKAVLKFIEGISEKTLRSTVALTAARGRGKSAALGLAIAGAVAFGYSNIFVTSPSPDNLHTLFEFVFKGFDALQYQEHLDYEIIQSLNPEFNKAVIRVNVFREHRQTIQYIHPADAVKLGQAELVVIDEAAAIPLPLVKSLLGPYLVFMASTINGYEGTGRSLSLKLIQQLRQQSAQSQVSTTAENKTTTTARLASARTLYEVSLQESIRYAPGDAVEKWLNDLLCLDCLNITRIVSGCPLPEACELYYVNRDTLFCYHKASEVFLQRLMALYVASHYKNSPNDLQMLSDAPAHHLFCLLPPVPPTQNALPEVLAVIQVCLEGEISRQSILNSLSRGKKASGDLIPWTVSEQFQDPDFGGLSGGRVVRIAVHPDYQGMGYGSRALQLLQMYYEGRFPCLEEKVLETPQEIHTVSSEAVSLLEEVITPRKDLPPLLLKLNERPAERLDYLGVSYGLTPRLLKFWKRAGFVPVYLRQTPNDLTGEHSCIMLKTLTDEDEADQGGWLAAFWKDFRRRFLALLSYQFSTFSPSLALNIIQNRNMGKPAQPALSREELEALFLPYDLKRLEMYSRNMVDYHLIMDMIPAISRIYFLNQLGDLALSAAQSALLLGIGLQHKSVDQLEKEIELPSGQLMGLFNRIIRKVVKLFNEVQEKAIEEQMVAAKDVVMEPTMKTLSDDLDEAAKEFQEKHKKEVGKLKSMDLSEYIIRGDDEEWNEVLNKAGPNASIISLKSDKKRKLEAKQEPKQSKKLKNRETKNKKDMKLKRKK</sequence>
<reference key="1">
    <citation type="journal article" date="2000" name="DNA Res.">
        <title>Prediction of the coding sequences of unidentified human genes. XIX. The complete sequences of 100 new cDNA clones from brain which code for large proteins in vitro.</title>
        <authorList>
            <person name="Nagase T."/>
            <person name="Kikuno R."/>
            <person name="Hattori A."/>
            <person name="Kondo Y."/>
            <person name="Okumura K."/>
            <person name="Ohara O."/>
        </authorList>
    </citation>
    <scope>NUCLEOTIDE SEQUENCE [LARGE SCALE MRNA] (ISOFORM 1)</scope>
    <scope>VARIANT HIS-461</scope>
    <source>
        <tissue>Brain</tissue>
    </source>
</reference>
<reference key="2">
    <citation type="journal article" date="2001" name="Genome Res.">
        <title>Towards a catalog of human genes and proteins: sequencing and analysis of 500 novel complete protein coding human cDNAs.</title>
        <authorList>
            <person name="Wiemann S."/>
            <person name="Weil B."/>
            <person name="Wellenreuther R."/>
            <person name="Gassenhuber J."/>
            <person name="Glassl S."/>
            <person name="Ansorge W."/>
            <person name="Boecher M."/>
            <person name="Bloecker H."/>
            <person name="Bauersachs S."/>
            <person name="Blum H."/>
            <person name="Lauber J."/>
            <person name="Duesterhoeft A."/>
            <person name="Beyer A."/>
            <person name="Koehrer K."/>
            <person name="Strack N."/>
            <person name="Mewes H.-W."/>
            <person name="Ottenwaelder B."/>
            <person name="Obermaier B."/>
            <person name="Tampe J."/>
            <person name="Heubner D."/>
            <person name="Wambutt R."/>
            <person name="Korn B."/>
            <person name="Klein M."/>
            <person name="Poustka A."/>
        </authorList>
    </citation>
    <scope>NUCLEOTIDE SEQUENCE [LARGE SCALE MRNA] (ISOFORM 1)</scope>
    <scope>VARIANT HIS-461</scope>
    <source>
        <tissue>Testis</tissue>
    </source>
</reference>
<reference key="3">
    <citation type="journal article" date="2004" name="Nat. Genet.">
        <title>Complete sequencing and characterization of 21,243 full-length human cDNAs.</title>
        <authorList>
            <person name="Ota T."/>
            <person name="Suzuki Y."/>
            <person name="Nishikawa T."/>
            <person name="Otsuki T."/>
            <person name="Sugiyama T."/>
            <person name="Irie R."/>
            <person name="Wakamatsu A."/>
            <person name="Hayashi K."/>
            <person name="Sato H."/>
            <person name="Nagai K."/>
            <person name="Kimura K."/>
            <person name="Makita H."/>
            <person name="Sekine M."/>
            <person name="Obayashi M."/>
            <person name="Nishi T."/>
            <person name="Shibahara T."/>
            <person name="Tanaka T."/>
            <person name="Ishii S."/>
            <person name="Yamamoto J."/>
            <person name="Saito K."/>
            <person name="Kawai Y."/>
            <person name="Isono Y."/>
            <person name="Nakamura Y."/>
            <person name="Nagahari K."/>
            <person name="Murakami K."/>
            <person name="Yasuda T."/>
            <person name="Iwayanagi T."/>
            <person name="Wagatsuma M."/>
            <person name="Shiratori A."/>
            <person name="Sudo H."/>
            <person name="Hosoiri T."/>
            <person name="Kaku Y."/>
            <person name="Kodaira H."/>
            <person name="Kondo H."/>
            <person name="Sugawara M."/>
            <person name="Takahashi M."/>
            <person name="Kanda K."/>
            <person name="Yokoi T."/>
            <person name="Furuya T."/>
            <person name="Kikkawa E."/>
            <person name="Omura Y."/>
            <person name="Abe K."/>
            <person name="Kamihara K."/>
            <person name="Katsuta N."/>
            <person name="Sato K."/>
            <person name="Tanikawa M."/>
            <person name="Yamazaki M."/>
            <person name="Ninomiya K."/>
            <person name="Ishibashi T."/>
            <person name="Yamashita H."/>
            <person name="Murakawa K."/>
            <person name="Fujimori K."/>
            <person name="Tanai H."/>
            <person name="Kimata M."/>
            <person name="Watanabe M."/>
            <person name="Hiraoka S."/>
            <person name="Chiba Y."/>
            <person name="Ishida S."/>
            <person name="Ono Y."/>
            <person name="Takiguchi S."/>
            <person name="Watanabe S."/>
            <person name="Yosida M."/>
            <person name="Hotuta T."/>
            <person name="Kusano J."/>
            <person name="Kanehori K."/>
            <person name="Takahashi-Fujii A."/>
            <person name="Hara H."/>
            <person name="Tanase T.-O."/>
            <person name="Nomura Y."/>
            <person name="Togiya S."/>
            <person name="Komai F."/>
            <person name="Hara R."/>
            <person name="Takeuchi K."/>
            <person name="Arita M."/>
            <person name="Imose N."/>
            <person name="Musashino K."/>
            <person name="Yuuki H."/>
            <person name="Oshima A."/>
            <person name="Sasaki N."/>
            <person name="Aotsuka S."/>
            <person name="Yoshikawa Y."/>
            <person name="Matsunawa H."/>
            <person name="Ichihara T."/>
            <person name="Shiohata N."/>
            <person name="Sano S."/>
            <person name="Moriya S."/>
            <person name="Momiyama H."/>
            <person name="Satoh N."/>
            <person name="Takami S."/>
            <person name="Terashima Y."/>
            <person name="Suzuki O."/>
            <person name="Nakagawa S."/>
            <person name="Senoh A."/>
            <person name="Mizoguchi H."/>
            <person name="Goto Y."/>
            <person name="Shimizu F."/>
            <person name="Wakebe H."/>
            <person name="Hishigaki H."/>
            <person name="Watanabe T."/>
            <person name="Sugiyama A."/>
            <person name="Takemoto M."/>
            <person name="Kawakami B."/>
            <person name="Yamazaki M."/>
            <person name="Watanabe K."/>
            <person name="Kumagai A."/>
            <person name="Itakura S."/>
            <person name="Fukuzumi Y."/>
            <person name="Fujimori Y."/>
            <person name="Komiyama M."/>
            <person name="Tashiro H."/>
            <person name="Tanigami A."/>
            <person name="Fujiwara T."/>
            <person name="Ono T."/>
            <person name="Yamada K."/>
            <person name="Fujii Y."/>
            <person name="Ozaki K."/>
            <person name="Hirao M."/>
            <person name="Ohmori Y."/>
            <person name="Kawabata A."/>
            <person name="Hikiji T."/>
            <person name="Kobatake N."/>
            <person name="Inagaki H."/>
            <person name="Ikema Y."/>
            <person name="Okamoto S."/>
            <person name="Okitani R."/>
            <person name="Kawakami T."/>
            <person name="Noguchi S."/>
            <person name="Itoh T."/>
            <person name="Shigeta K."/>
            <person name="Senba T."/>
            <person name="Matsumura K."/>
            <person name="Nakajima Y."/>
            <person name="Mizuno T."/>
            <person name="Morinaga M."/>
            <person name="Sasaki M."/>
            <person name="Togashi T."/>
            <person name="Oyama M."/>
            <person name="Hata H."/>
            <person name="Watanabe M."/>
            <person name="Komatsu T."/>
            <person name="Mizushima-Sugano J."/>
            <person name="Satoh T."/>
            <person name="Shirai Y."/>
            <person name="Takahashi Y."/>
            <person name="Nakagawa K."/>
            <person name="Okumura K."/>
            <person name="Nagase T."/>
            <person name="Nomura N."/>
            <person name="Kikuchi H."/>
            <person name="Masuho Y."/>
            <person name="Yamashita R."/>
            <person name="Nakai K."/>
            <person name="Yada T."/>
            <person name="Nakamura Y."/>
            <person name="Ohara O."/>
            <person name="Isogai T."/>
            <person name="Sugano S."/>
        </authorList>
    </citation>
    <scope>NUCLEOTIDE SEQUENCE [LARGE SCALE MRNA] (ISOFORMS 1 AND 2)</scope>
    <scope>VARIANT HIS-461</scope>
    <source>
        <tissue>Cerebellum</tissue>
        <tissue>Mammary gland</tissue>
    </source>
</reference>
<reference key="4">
    <citation type="journal article" date="2006" name="Nature">
        <title>Human chromosome 11 DNA sequence and analysis including novel gene identification.</title>
        <authorList>
            <person name="Taylor T.D."/>
            <person name="Noguchi H."/>
            <person name="Totoki Y."/>
            <person name="Toyoda A."/>
            <person name="Kuroki Y."/>
            <person name="Dewar K."/>
            <person name="Lloyd C."/>
            <person name="Itoh T."/>
            <person name="Takeda T."/>
            <person name="Kim D.-W."/>
            <person name="She X."/>
            <person name="Barlow K.F."/>
            <person name="Bloom T."/>
            <person name="Bruford E."/>
            <person name="Chang J.L."/>
            <person name="Cuomo C.A."/>
            <person name="Eichler E."/>
            <person name="FitzGerald M.G."/>
            <person name="Jaffe D.B."/>
            <person name="LaButti K."/>
            <person name="Nicol R."/>
            <person name="Park H.-S."/>
            <person name="Seaman C."/>
            <person name="Sougnez C."/>
            <person name="Yang X."/>
            <person name="Zimmer A.R."/>
            <person name="Zody M.C."/>
            <person name="Birren B.W."/>
            <person name="Nusbaum C."/>
            <person name="Fujiyama A."/>
            <person name="Hattori M."/>
            <person name="Rogers J."/>
            <person name="Lander E.S."/>
            <person name="Sakaki Y."/>
        </authorList>
    </citation>
    <scope>NUCLEOTIDE SEQUENCE [LARGE SCALE GENOMIC DNA]</scope>
</reference>
<reference key="5">
    <citation type="journal article" date="2004" name="Genome Res.">
        <title>The status, quality, and expansion of the NIH full-length cDNA project: the Mammalian Gene Collection (MGC).</title>
        <authorList>
            <consortium name="The MGC Project Team"/>
        </authorList>
    </citation>
    <scope>NUCLEOTIDE SEQUENCE [LARGE SCALE MRNA] (ISOFORM 1)</scope>
    <scope>VARIANT HIS-461</scope>
    <source>
        <tissue>Brain</tissue>
    </source>
</reference>
<reference key="6">
    <citation type="journal article" date="2003" name="Biochem. Biophys. Res. Commun.">
        <title>Molecular cloning of a novel human gene encoding histone acetyltransferase-like protein involved in transcriptional activation of hTERT.</title>
        <authorList>
            <person name="Lv J."/>
            <person name="Liu H."/>
            <person name="Wang Q."/>
            <person name="Tang Z."/>
            <person name="Hou L."/>
            <person name="Zhang B."/>
        </authorList>
    </citation>
    <scope>NUCLEOTIDE SEQUENCE [MRNA] OF 154-1025</scope>
    <scope>FUNCTION</scope>
    <scope>SUBCELLULAR LOCATION</scope>
    <scope>VARIANT HIS-461</scope>
    <source>
        <tissue>Cervix carcinoma</tissue>
    </source>
</reference>
<reference key="7">
    <citation type="journal article" date="2002" name="Mol. Biol. Cell">
        <title>Functional proteomic analysis of human nucleolus.</title>
        <authorList>
            <person name="Scherl A."/>
            <person name="Coute Y."/>
            <person name="Deon C."/>
            <person name="Calle A."/>
            <person name="Kindbeiter K."/>
            <person name="Sanchez J.-C."/>
            <person name="Greco A."/>
            <person name="Hochstrasser D.F."/>
            <person name="Diaz J.-J."/>
        </authorList>
    </citation>
    <scope>SUBCELLULAR LOCATION [LARGE SCALE ANALYSIS]</scope>
    <source>
        <tissue>Cervix carcinoma</tissue>
    </source>
</reference>
<reference key="8">
    <citation type="journal article" date="2007" name="J. Biol. Chem.">
        <title>Histone acetyltransferase hALP and nuclear membrane protein hsSUN1 function in de-condensation of mitotic chromosomes.</title>
        <authorList>
            <person name="Chi Y.-H."/>
            <person name="Haller K."/>
            <person name="Peloponese J.-M. Jr."/>
            <person name="Jeang K.-T."/>
        </authorList>
    </citation>
    <scope>FUNCTION</scope>
    <scope>INTERACTION WITH SUN1</scope>
</reference>
<reference key="9">
    <citation type="journal article" date="2007" name="Mol. Cell">
        <title>Purification of human telomerase complexes identifies factors involved in telomerase biogenesis and telomere length regulation.</title>
        <authorList>
            <person name="Fu D."/>
            <person name="Collins K."/>
        </authorList>
    </citation>
    <scope>FUNCTION</scope>
    <scope>INTERACTION WITH TERT</scope>
</reference>
<reference key="10">
    <citation type="journal article" date="2007" name="Mol. Cell. Biochem.">
        <title>DNA damage induces N-acetyltransferase NAT10 gene expression through transcriptional activation.</title>
        <authorList>
            <person name="Liu H."/>
            <person name="Ling Y."/>
            <person name="Gong Y."/>
            <person name="Sun Y."/>
            <person name="Hou L."/>
            <person name="Zhang B."/>
        </authorList>
    </citation>
    <scope>INDUCTION BY GENOTOXIC AGENTS</scope>
</reference>
<reference key="11">
    <citation type="journal article" date="2008" name="Proc. Natl. Acad. Sci. U.S.A.">
        <title>A quantitative atlas of mitotic phosphorylation.</title>
        <authorList>
            <person name="Dephoure N."/>
            <person name="Zhou C."/>
            <person name="Villen J."/>
            <person name="Beausoleil S.A."/>
            <person name="Bakalarski C.E."/>
            <person name="Elledge S.J."/>
            <person name="Gygi S.P."/>
        </authorList>
    </citation>
    <scope>PHOSPHORYLATION [LARGE SCALE ANALYSIS] AT SER-934; SER-984 AND SER-987</scope>
    <scope>IDENTIFICATION BY MASS SPECTROMETRY [LARGE SCALE ANALYSIS]</scope>
    <source>
        <tissue>Cervix carcinoma</tissue>
    </source>
</reference>
<reference key="12">
    <citation type="journal article" date="2009" name="Exp. Cell Res.">
        <title>NAT10, a nucleolar protein, localizes to the midbody and regulates cytokinesis and acetylation of microtubules.</title>
        <authorList>
            <person name="Shen Q."/>
            <person name="Zheng X."/>
            <person name="McNutt M.A."/>
            <person name="Guang L."/>
            <person name="Sun Y."/>
            <person name="Wang J."/>
            <person name="Gong Y."/>
            <person name="Hou L."/>
            <person name="Zhang B."/>
        </authorList>
    </citation>
    <scope>FUNCTION</scope>
    <scope>SUBCELLULAR LOCATION</scope>
</reference>
<reference key="13">
    <citation type="journal article" date="2009" name="Science">
        <title>Lysine acetylation targets protein complexes and co-regulates major cellular functions.</title>
        <authorList>
            <person name="Choudhary C."/>
            <person name="Kumar C."/>
            <person name="Gnad F."/>
            <person name="Nielsen M.L."/>
            <person name="Rehman M."/>
            <person name="Walther T.C."/>
            <person name="Olsen J.V."/>
            <person name="Mann M."/>
        </authorList>
    </citation>
    <scope>ACETYLATION [LARGE SCALE ANALYSIS] AT LYS-426</scope>
    <scope>IDENTIFICATION BY MASS SPECTROMETRY [LARGE SCALE ANALYSIS]</scope>
</reference>
<reference key="14">
    <citation type="journal article" date="2013" name="J. Proteome Res.">
        <title>Toward a comprehensive characterization of a human cancer cell phosphoproteome.</title>
        <authorList>
            <person name="Zhou H."/>
            <person name="Di Palma S."/>
            <person name="Preisinger C."/>
            <person name="Peng M."/>
            <person name="Polat A.N."/>
            <person name="Heck A.J."/>
            <person name="Mohammed S."/>
        </authorList>
    </citation>
    <scope>PHOSPHORYLATION [LARGE SCALE ANALYSIS] AT THR-716; SER-934; SER-984 AND SER-987</scope>
    <scope>IDENTIFICATION BY MASS SPECTROMETRY [LARGE SCALE ANALYSIS]</scope>
    <source>
        <tissue>Cervix carcinoma</tissue>
        <tissue>Erythroleukemia</tissue>
    </source>
</reference>
<reference key="15">
    <citation type="journal article" date="2014" name="J. Biol. Chem.">
        <title>Human NAT10 is an ATP-dependent RNA acetyltransferase responsible for N4-acetylcytidine formation in 18 S ribosomal RNA (rRNA).</title>
        <authorList>
            <person name="Ito S."/>
            <person name="Horikawa S."/>
            <person name="Suzuki T."/>
            <person name="Kawauchi H."/>
            <person name="Tanaka Y."/>
            <person name="Suzuki T."/>
            <person name="Suzuki T."/>
        </authorList>
    </citation>
    <scope>FUNCTION</scope>
    <scope>CATALYTIC ACTIVITY</scope>
</reference>
<reference key="16">
    <citation type="journal article" date="2014" name="Science">
        <title>Chemical inhibition of NAT10 corrects defects of laminopathic cells.</title>
        <authorList>
            <person name="Larrieu D."/>
            <person name="Britton S."/>
            <person name="Demir M."/>
            <person name="Rodriguez R."/>
            <person name="Jackson S.P."/>
        </authorList>
    </citation>
    <scope>ACTIVITY REGULATION</scope>
    <scope>SUBCELLULAR LOCATION</scope>
    <scope>MUTAGENESIS OF GLY-641</scope>
</reference>
<reference key="17">
    <citation type="journal article" date="2015" name="Nucleic Acids Res.">
        <title>Yeast Kre33 and human NAT10 are conserved 18S rRNA cytosine acetyltransferases that modify tRNAs assisted by the adaptor Tan1/THUMPD1.</title>
        <authorList>
            <person name="Sharma S."/>
            <person name="Langhendries J.L."/>
            <person name="Watzinger P."/>
            <person name="Koetter P."/>
            <person name="Entian K.D."/>
            <person name="Lafontaine D.L."/>
        </authorList>
    </citation>
    <scope>FUNCTION</scope>
    <scope>INTERACTION WITH THUMPD1</scope>
    <scope>SUBCELLULAR LOCATION</scope>
</reference>
<reference key="18">
    <citation type="journal article" date="2016" name="EMBO Rep.">
        <title>NAT10 regulates p53 activation through acetylating p53 at K120 and ubiquitinating Mdm2.</title>
        <authorList>
            <person name="Liu X."/>
            <person name="Tan Y."/>
            <person name="Zhang C."/>
            <person name="Zhang Y."/>
            <person name="Zhang L."/>
            <person name="Ren P."/>
            <person name="Deng H."/>
            <person name="Luo J."/>
            <person name="Ke Y."/>
            <person name="Du X."/>
        </authorList>
    </citation>
    <scope>FUNCTION</scope>
</reference>
<reference key="19">
    <citation type="journal article" date="2017" name="Biochem. Biophys. Res. Commun.">
        <title>Autoacetylation of NAT10 is critical for its function in rRNA transcription activation.</title>
        <authorList>
            <person name="Cai S."/>
            <person name="Liu X."/>
            <person name="Zhang C."/>
            <person name="Xing B."/>
            <person name="Du X."/>
        </authorList>
    </citation>
    <scope>FUNCTION</scope>
    <scope>ACETYLATION AT LYS-426</scope>
    <scope>MUTAGENESIS OF LYS-426</scope>
</reference>
<reference key="20">
    <citation type="journal article" date="2018" name="Cell">
        <title>Acetylation of cytidine in mRNA promotes translation efficiency.</title>
        <authorList>
            <person name="Arango D."/>
            <person name="Sturgill D."/>
            <person name="Alhusaini N."/>
            <person name="Dillman A.A."/>
            <person name="Sweet T.J."/>
            <person name="Hanson G."/>
            <person name="Hosogane M."/>
            <person name="Sinclair W.R."/>
            <person name="Nanan K.K."/>
            <person name="Mandler M.D."/>
            <person name="Fox S.D."/>
            <person name="Zengeya T.T."/>
            <person name="Andresson T."/>
            <person name="Meier J.L."/>
            <person name="Coller J."/>
            <person name="Oberdoerffer S."/>
        </authorList>
    </citation>
    <scope>FUNCTION</scope>
    <scope>CATALYTIC ACTIVITY</scope>
</reference>
<reference key="21">
    <citation type="journal article" date="2018" name="Nucleic Acids Res.">
        <title>Deacetylation of NAT10 by Sirt1 promotes the transition from rRNA biogenesis to autophagy upon energy stress.</title>
        <authorList>
            <person name="Liu X."/>
            <person name="Cai S."/>
            <person name="Zhang C."/>
            <person name="Liu Z."/>
            <person name="Luo J."/>
            <person name="Xing B."/>
            <person name="Du X."/>
        </authorList>
    </citation>
    <scope>FUNCTION</scope>
    <scope>SUBCELLULAR LOCATION</scope>
</reference>
<reference key="22">
    <citation type="journal article" date="2019" name="Cell Rep.">
        <title>CCDC84 Acetylation Oscillation Regulates Centrosome Duplication by Modulating HsSAS-6 Degradation.</title>
        <authorList>
            <person name="Wang T."/>
            <person name="Zou Y."/>
            <person name="Huang N."/>
            <person name="Teng J."/>
            <person name="Chen J."/>
        </authorList>
    </citation>
    <scope>FUNCTION</scope>
</reference>
<reference key="23">
    <citation type="journal article" date="2022" name="Mol. Cell">
        <title>Direct epitranscriptomic regulation of mammalian translation initiation through N4-acetylcytidine.</title>
        <authorList>
            <person name="Arango D."/>
            <person name="Sturgill D."/>
            <person name="Yang R."/>
            <person name="Kanai T."/>
            <person name="Bauer P."/>
            <person name="Roy J."/>
            <person name="Wang Z."/>
            <person name="Hosogane M."/>
            <person name="Schiffers S."/>
            <person name="Oberdoerffer S."/>
        </authorList>
    </citation>
    <scope>FUNCTION</scope>
    <scope>CATALYTIC ACTIVITY</scope>
</reference>
<reference evidence="31 32" key="24">
    <citation type="journal article" date="2021" name="Science">
        <title>Nucleolar maturation of the human small subunit processome.</title>
        <authorList>
            <person name="Singh S."/>
            <person name="Vanden Broeck A."/>
            <person name="Miller L."/>
            <person name="Chaker-Margot M."/>
            <person name="Klinge S."/>
        </authorList>
    </citation>
    <scope>STRUCTURE BY ELECTRON MICROSCOPY (3.60 ANGSTROMS)</scope>
    <scope>FUNCTION</scope>
    <scope>SUBUNIT</scope>
    <scope>SUBCELLULAR LOCATION</scope>
</reference>
<reference key="25">
    <citation type="journal article" date="2011" name="BMC Syst. Biol.">
        <title>Initial characterization of the human central proteome.</title>
        <authorList>
            <person name="Burkard T.R."/>
            <person name="Planyavsky M."/>
            <person name="Kaupe I."/>
            <person name="Breitwieser F.P."/>
            <person name="Buerckstuemmer T."/>
            <person name="Bennett K.L."/>
            <person name="Superti-Furga G."/>
            <person name="Colinge J."/>
        </authorList>
    </citation>
    <scope>VARIANT [LARGE SCALE ANALYSIS] HIS-461</scope>
    <scope>IDENTIFICATION BY MASS SPECTROMETRY [LARGE SCALE ANALYSIS]</scope>
</reference>